<protein>
    <recommendedName>
        <fullName evidence="1">Large ribosomal subunit protein uL1</fullName>
    </recommendedName>
    <alternativeName>
        <fullName evidence="2">50S ribosomal protein L1</fullName>
    </alternativeName>
</protein>
<feature type="chain" id="PRO_1000141455" description="Large ribosomal subunit protein uL1">
    <location>
        <begin position="1"/>
        <end position="234"/>
    </location>
</feature>
<reference key="1">
    <citation type="journal article" date="2008" name="Genome Res.">
        <title>Comparative genome analysis of Salmonella enteritidis PT4 and Salmonella gallinarum 287/91 provides insights into evolutionary and host adaptation pathways.</title>
        <authorList>
            <person name="Thomson N.R."/>
            <person name="Clayton D.J."/>
            <person name="Windhorst D."/>
            <person name="Vernikos G."/>
            <person name="Davidson S."/>
            <person name="Churcher C."/>
            <person name="Quail M.A."/>
            <person name="Stevens M."/>
            <person name="Jones M.A."/>
            <person name="Watson M."/>
            <person name="Barron A."/>
            <person name="Layton A."/>
            <person name="Pickard D."/>
            <person name="Kingsley R.A."/>
            <person name="Bignell A."/>
            <person name="Clark L."/>
            <person name="Harris B."/>
            <person name="Ormond D."/>
            <person name="Abdellah Z."/>
            <person name="Brooks K."/>
            <person name="Cherevach I."/>
            <person name="Chillingworth T."/>
            <person name="Woodward J."/>
            <person name="Norberczak H."/>
            <person name="Lord A."/>
            <person name="Arrowsmith C."/>
            <person name="Jagels K."/>
            <person name="Moule S."/>
            <person name="Mungall K."/>
            <person name="Saunders M."/>
            <person name="Whitehead S."/>
            <person name="Chabalgoity J.A."/>
            <person name="Maskell D."/>
            <person name="Humphreys T."/>
            <person name="Roberts M."/>
            <person name="Barrow P.A."/>
            <person name="Dougan G."/>
            <person name="Parkhill J."/>
        </authorList>
    </citation>
    <scope>NUCLEOTIDE SEQUENCE [LARGE SCALE GENOMIC DNA]</scope>
    <source>
        <strain>287/91 / NCTC 13346</strain>
    </source>
</reference>
<comment type="function">
    <text evidence="1">Binds directly to 23S rRNA. The L1 stalk is quite mobile in the ribosome, and is involved in E site tRNA release.</text>
</comment>
<comment type="function">
    <text evidence="1">Protein L1 is also a translational repressor protein, it controls the translation of the L11 operon by binding to its mRNA.</text>
</comment>
<comment type="subunit">
    <text evidence="1">Part of the 50S ribosomal subunit.</text>
</comment>
<comment type="similarity">
    <text evidence="1">Belongs to the universal ribosomal protein uL1 family.</text>
</comment>
<keyword id="KW-0678">Repressor</keyword>
<keyword id="KW-0687">Ribonucleoprotein</keyword>
<keyword id="KW-0689">Ribosomal protein</keyword>
<keyword id="KW-0694">RNA-binding</keyword>
<keyword id="KW-0699">rRNA-binding</keyword>
<keyword id="KW-0810">Translation regulation</keyword>
<keyword id="KW-0820">tRNA-binding</keyword>
<organism>
    <name type="scientific">Salmonella gallinarum (strain 287/91 / NCTC 13346)</name>
    <dbReference type="NCBI Taxonomy" id="550538"/>
    <lineage>
        <taxon>Bacteria</taxon>
        <taxon>Pseudomonadati</taxon>
        <taxon>Pseudomonadota</taxon>
        <taxon>Gammaproteobacteria</taxon>
        <taxon>Enterobacterales</taxon>
        <taxon>Enterobacteriaceae</taxon>
        <taxon>Salmonella</taxon>
    </lineage>
</organism>
<sequence>MAKLTKRMRVIREKVDATKQYDINEAIALLKELATAKFNESVDVAVNLGIDARKSDQNVRGATVLPHGTGRSVRVAVFTQGPNAEAAKAAGAELVGMEDLADQIKKGEMNFDVVIASPDAMRVVGLLGQVLGPRGLMPNPKVGTVTPNVAEAVKNAKAGQVRYRNDKNGIIHTTIGKVDFDADKLKENLEALLVALKKAKPSQAKGVYIKKVSISTTMGAGVAVDQAGLSASAN</sequence>
<evidence type="ECO:0000255" key="1">
    <source>
        <dbReference type="HAMAP-Rule" id="MF_01318"/>
    </source>
</evidence>
<evidence type="ECO:0000305" key="2"/>
<dbReference type="EMBL" id="AM933173">
    <property type="protein sequence ID" value="CAR39247.1"/>
    <property type="molecule type" value="Genomic_DNA"/>
</dbReference>
<dbReference type="RefSeq" id="WP_001096675.1">
    <property type="nucleotide sequence ID" value="NC_011274.1"/>
</dbReference>
<dbReference type="SMR" id="B5RFK4"/>
<dbReference type="KEGG" id="seg:SG3457"/>
<dbReference type="HOGENOM" id="CLU_062853_0_0_6"/>
<dbReference type="Proteomes" id="UP000008321">
    <property type="component" value="Chromosome"/>
</dbReference>
<dbReference type="GO" id="GO:0022625">
    <property type="term" value="C:cytosolic large ribosomal subunit"/>
    <property type="evidence" value="ECO:0007669"/>
    <property type="project" value="TreeGrafter"/>
</dbReference>
<dbReference type="GO" id="GO:0019843">
    <property type="term" value="F:rRNA binding"/>
    <property type="evidence" value="ECO:0007669"/>
    <property type="project" value="UniProtKB-UniRule"/>
</dbReference>
<dbReference type="GO" id="GO:0003735">
    <property type="term" value="F:structural constituent of ribosome"/>
    <property type="evidence" value="ECO:0007669"/>
    <property type="project" value="InterPro"/>
</dbReference>
<dbReference type="GO" id="GO:0000049">
    <property type="term" value="F:tRNA binding"/>
    <property type="evidence" value="ECO:0007669"/>
    <property type="project" value="UniProtKB-KW"/>
</dbReference>
<dbReference type="GO" id="GO:0006417">
    <property type="term" value="P:regulation of translation"/>
    <property type="evidence" value="ECO:0007669"/>
    <property type="project" value="UniProtKB-KW"/>
</dbReference>
<dbReference type="GO" id="GO:0006412">
    <property type="term" value="P:translation"/>
    <property type="evidence" value="ECO:0007669"/>
    <property type="project" value="UniProtKB-UniRule"/>
</dbReference>
<dbReference type="CDD" id="cd00403">
    <property type="entry name" value="Ribosomal_L1"/>
    <property type="match status" value="1"/>
</dbReference>
<dbReference type="FunFam" id="3.40.50.790:FF:000001">
    <property type="entry name" value="50S ribosomal protein L1"/>
    <property type="match status" value="1"/>
</dbReference>
<dbReference type="Gene3D" id="3.30.190.20">
    <property type="match status" value="1"/>
</dbReference>
<dbReference type="Gene3D" id="3.40.50.790">
    <property type="match status" value="1"/>
</dbReference>
<dbReference type="HAMAP" id="MF_01318_B">
    <property type="entry name" value="Ribosomal_uL1_B"/>
    <property type="match status" value="1"/>
</dbReference>
<dbReference type="InterPro" id="IPR005878">
    <property type="entry name" value="Ribosom_uL1_bac-type"/>
</dbReference>
<dbReference type="InterPro" id="IPR002143">
    <property type="entry name" value="Ribosomal_uL1"/>
</dbReference>
<dbReference type="InterPro" id="IPR023674">
    <property type="entry name" value="Ribosomal_uL1-like"/>
</dbReference>
<dbReference type="InterPro" id="IPR028364">
    <property type="entry name" value="Ribosomal_uL1/biogenesis"/>
</dbReference>
<dbReference type="InterPro" id="IPR016095">
    <property type="entry name" value="Ribosomal_uL1_3-a/b-sand"/>
</dbReference>
<dbReference type="InterPro" id="IPR023673">
    <property type="entry name" value="Ribosomal_uL1_CS"/>
</dbReference>
<dbReference type="NCBIfam" id="TIGR01169">
    <property type="entry name" value="rplA_bact"/>
    <property type="match status" value="1"/>
</dbReference>
<dbReference type="PANTHER" id="PTHR36427">
    <property type="entry name" value="54S RIBOSOMAL PROTEIN L1, MITOCHONDRIAL"/>
    <property type="match status" value="1"/>
</dbReference>
<dbReference type="PANTHER" id="PTHR36427:SF3">
    <property type="entry name" value="LARGE RIBOSOMAL SUBUNIT PROTEIN UL1M"/>
    <property type="match status" value="1"/>
</dbReference>
<dbReference type="Pfam" id="PF00687">
    <property type="entry name" value="Ribosomal_L1"/>
    <property type="match status" value="1"/>
</dbReference>
<dbReference type="PIRSF" id="PIRSF002155">
    <property type="entry name" value="Ribosomal_L1"/>
    <property type="match status" value="1"/>
</dbReference>
<dbReference type="SUPFAM" id="SSF56808">
    <property type="entry name" value="Ribosomal protein L1"/>
    <property type="match status" value="1"/>
</dbReference>
<dbReference type="PROSITE" id="PS01199">
    <property type="entry name" value="RIBOSOMAL_L1"/>
    <property type="match status" value="1"/>
</dbReference>
<accession>B5RFK4</accession>
<name>RL1_SALG2</name>
<gene>
    <name evidence="1" type="primary">rplA</name>
    <name type="ordered locus">SG3457</name>
</gene>
<proteinExistence type="inferred from homology"/>